<proteinExistence type="inferred from homology"/>
<keyword id="KW-0030">Aminoacyl-tRNA synthetase</keyword>
<keyword id="KW-0067">ATP-binding</keyword>
<keyword id="KW-0963">Cytoplasm</keyword>
<keyword id="KW-0436">Ligase</keyword>
<keyword id="KW-0460">Magnesium</keyword>
<keyword id="KW-0479">Metal-binding</keyword>
<keyword id="KW-0547">Nucleotide-binding</keyword>
<keyword id="KW-0648">Protein biosynthesis</keyword>
<keyword id="KW-1185">Reference proteome</keyword>
<keyword id="KW-0694">RNA-binding</keyword>
<keyword id="KW-0820">tRNA-binding</keyword>
<comment type="catalytic activity">
    <reaction evidence="1">
        <text>tRNA(Phe) + L-phenylalanine + ATP = L-phenylalanyl-tRNA(Phe) + AMP + diphosphate + H(+)</text>
        <dbReference type="Rhea" id="RHEA:19413"/>
        <dbReference type="Rhea" id="RHEA-COMP:9668"/>
        <dbReference type="Rhea" id="RHEA-COMP:9699"/>
        <dbReference type="ChEBI" id="CHEBI:15378"/>
        <dbReference type="ChEBI" id="CHEBI:30616"/>
        <dbReference type="ChEBI" id="CHEBI:33019"/>
        <dbReference type="ChEBI" id="CHEBI:58095"/>
        <dbReference type="ChEBI" id="CHEBI:78442"/>
        <dbReference type="ChEBI" id="CHEBI:78531"/>
        <dbReference type="ChEBI" id="CHEBI:456215"/>
        <dbReference type="EC" id="6.1.1.20"/>
    </reaction>
</comment>
<comment type="cofactor">
    <cofactor evidence="1">
        <name>Mg(2+)</name>
        <dbReference type="ChEBI" id="CHEBI:18420"/>
    </cofactor>
    <text evidence="1">Binds 2 magnesium ions per tetramer.</text>
</comment>
<comment type="subunit">
    <text evidence="1">Tetramer of two alpha and two beta subunits.</text>
</comment>
<comment type="subcellular location">
    <subcellularLocation>
        <location evidence="1">Cytoplasm</location>
    </subcellularLocation>
</comment>
<comment type="similarity">
    <text evidence="1">Belongs to the phenylalanyl-tRNA synthetase beta subunit family. Type 1 subfamily.</text>
</comment>
<organism>
    <name type="scientific">Bifidobacterium longum (strain NCC 2705)</name>
    <dbReference type="NCBI Taxonomy" id="206672"/>
    <lineage>
        <taxon>Bacteria</taxon>
        <taxon>Bacillati</taxon>
        <taxon>Actinomycetota</taxon>
        <taxon>Actinomycetes</taxon>
        <taxon>Bifidobacteriales</taxon>
        <taxon>Bifidobacteriaceae</taxon>
        <taxon>Bifidobacterium</taxon>
    </lineage>
</organism>
<dbReference type="EC" id="6.1.1.20" evidence="1"/>
<dbReference type="EMBL" id="AE014295">
    <property type="protein sequence ID" value="AAN24874.1"/>
    <property type="molecule type" value="Genomic_DNA"/>
</dbReference>
<dbReference type="RefSeq" id="NP_696238.1">
    <property type="nucleotide sequence ID" value="NC_004307.2"/>
</dbReference>
<dbReference type="RefSeq" id="WP_007053616.1">
    <property type="nucleotide sequence ID" value="NC_004307.2"/>
</dbReference>
<dbReference type="SMR" id="Q8G5E8"/>
<dbReference type="STRING" id="206672.BL1066"/>
<dbReference type="EnsemblBacteria" id="AAN24874">
    <property type="protein sequence ID" value="AAN24874"/>
    <property type="gene ID" value="BL1066"/>
</dbReference>
<dbReference type="KEGG" id="blo:BL1066"/>
<dbReference type="PATRIC" id="fig|206672.9.peg.773"/>
<dbReference type="HOGENOM" id="CLU_016891_0_0_11"/>
<dbReference type="OrthoDB" id="9805455at2"/>
<dbReference type="PhylomeDB" id="Q8G5E8"/>
<dbReference type="Proteomes" id="UP000000439">
    <property type="component" value="Chromosome"/>
</dbReference>
<dbReference type="GO" id="GO:0009328">
    <property type="term" value="C:phenylalanine-tRNA ligase complex"/>
    <property type="evidence" value="ECO:0007669"/>
    <property type="project" value="TreeGrafter"/>
</dbReference>
<dbReference type="GO" id="GO:0005524">
    <property type="term" value="F:ATP binding"/>
    <property type="evidence" value="ECO:0007669"/>
    <property type="project" value="UniProtKB-UniRule"/>
</dbReference>
<dbReference type="GO" id="GO:0000287">
    <property type="term" value="F:magnesium ion binding"/>
    <property type="evidence" value="ECO:0007669"/>
    <property type="project" value="UniProtKB-UniRule"/>
</dbReference>
<dbReference type="GO" id="GO:0004826">
    <property type="term" value="F:phenylalanine-tRNA ligase activity"/>
    <property type="evidence" value="ECO:0007669"/>
    <property type="project" value="UniProtKB-UniRule"/>
</dbReference>
<dbReference type="GO" id="GO:0000049">
    <property type="term" value="F:tRNA binding"/>
    <property type="evidence" value="ECO:0007669"/>
    <property type="project" value="UniProtKB-KW"/>
</dbReference>
<dbReference type="GO" id="GO:0006432">
    <property type="term" value="P:phenylalanyl-tRNA aminoacylation"/>
    <property type="evidence" value="ECO:0007669"/>
    <property type="project" value="UniProtKB-UniRule"/>
</dbReference>
<dbReference type="CDD" id="cd00769">
    <property type="entry name" value="PheRS_beta_core"/>
    <property type="match status" value="1"/>
</dbReference>
<dbReference type="CDD" id="cd02796">
    <property type="entry name" value="tRNA_bind_bactPheRS"/>
    <property type="match status" value="1"/>
</dbReference>
<dbReference type="FunFam" id="3.30.70.380:FF:000001">
    <property type="entry name" value="Phenylalanine--tRNA ligase beta subunit"/>
    <property type="match status" value="1"/>
</dbReference>
<dbReference type="Gene3D" id="3.30.56.10">
    <property type="match status" value="2"/>
</dbReference>
<dbReference type="Gene3D" id="3.30.930.10">
    <property type="entry name" value="Bira Bifunctional Protein, Domain 2"/>
    <property type="match status" value="1"/>
</dbReference>
<dbReference type="Gene3D" id="3.30.70.380">
    <property type="entry name" value="Ferrodoxin-fold anticodon-binding domain"/>
    <property type="match status" value="1"/>
</dbReference>
<dbReference type="Gene3D" id="2.40.50.140">
    <property type="entry name" value="Nucleic acid-binding proteins"/>
    <property type="match status" value="1"/>
</dbReference>
<dbReference type="Gene3D" id="3.50.40.10">
    <property type="entry name" value="Phenylalanyl-trna Synthetase, Chain B, domain 3"/>
    <property type="match status" value="1"/>
</dbReference>
<dbReference type="HAMAP" id="MF_00283">
    <property type="entry name" value="Phe_tRNA_synth_beta1"/>
    <property type="match status" value="1"/>
</dbReference>
<dbReference type="InterPro" id="IPR045864">
    <property type="entry name" value="aa-tRNA-synth_II/BPL/LPL"/>
</dbReference>
<dbReference type="InterPro" id="IPR005146">
    <property type="entry name" value="B3/B4_tRNA-bd"/>
</dbReference>
<dbReference type="InterPro" id="IPR009061">
    <property type="entry name" value="DNA-bd_dom_put_sf"/>
</dbReference>
<dbReference type="InterPro" id="IPR005121">
    <property type="entry name" value="Fdx_antiC-bd"/>
</dbReference>
<dbReference type="InterPro" id="IPR036690">
    <property type="entry name" value="Fdx_antiC-bd_sf"/>
</dbReference>
<dbReference type="InterPro" id="IPR012340">
    <property type="entry name" value="NA-bd_OB-fold"/>
</dbReference>
<dbReference type="InterPro" id="IPR045060">
    <property type="entry name" value="Phe-tRNA-ligase_IIc_bsu"/>
</dbReference>
<dbReference type="InterPro" id="IPR004532">
    <property type="entry name" value="Phe-tRNA-ligase_IIc_bsu_bact"/>
</dbReference>
<dbReference type="InterPro" id="IPR020825">
    <property type="entry name" value="Phe-tRNA_synthase-like_B3/B4"/>
</dbReference>
<dbReference type="InterPro" id="IPR041616">
    <property type="entry name" value="PheRS_beta_core"/>
</dbReference>
<dbReference type="InterPro" id="IPR002547">
    <property type="entry name" value="tRNA-bd_dom"/>
</dbReference>
<dbReference type="InterPro" id="IPR033714">
    <property type="entry name" value="tRNA_bind_bactPheRS"/>
</dbReference>
<dbReference type="InterPro" id="IPR005147">
    <property type="entry name" value="tRNA_synthase_B5-dom"/>
</dbReference>
<dbReference type="NCBIfam" id="TIGR00472">
    <property type="entry name" value="pheT_bact"/>
    <property type="match status" value="1"/>
</dbReference>
<dbReference type="PANTHER" id="PTHR10947:SF0">
    <property type="entry name" value="PHENYLALANINE--TRNA LIGASE BETA SUBUNIT"/>
    <property type="match status" value="1"/>
</dbReference>
<dbReference type="PANTHER" id="PTHR10947">
    <property type="entry name" value="PHENYLALANYL-TRNA SYNTHETASE BETA CHAIN AND LEUCINE-RICH REPEAT-CONTAINING PROTEIN 47"/>
    <property type="match status" value="1"/>
</dbReference>
<dbReference type="Pfam" id="PF03483">
    <property type="entry name" value="B3_4"/>
    <property type="match status" value="1"/>
</dbReference>
<dbReference type="Pfam" id="PF03484">
    <property type="entry name" value="B5"/>
    <property type="match status" value="1"/>
</dbReference>
<dbReference type="Pfam" id="PF03147">
    <property type="entry name" value="FDX-ACB"/>
    <property type="match status" value="1"/>
</dbReference>
<dbReference type="Pfam" id="PF01588">
    <property type="entry name" value="tRNA_bind"/>
    <property type="match status" value="1"/>
</dbReference>
<dbReference type="Pfam" id="PF17759">
    <property type="entry name" value="tRNA_synthFbeta"/>
    <property type="match status" value="1"/>
</dbReference>
<dbReference type="SMART" id="SM00873">
    <property type="entry name" value="B3_4"/>
    <property type="match status" value="1"/>
</dbReference>
<dbReference type="SMART" id="SM00874">
    <property type="entry name" value="B5"/>
    <property type="match status" value="1"/>
</dbReference>
<dbReference type="SMART" id="SM00896">
    <property type="entry name" value="FDX-ACB"/>
    <property type="match status" value="1"/>
</dbReference>
<dbReference type="SUPFAM" id="SSF54991">
    <property type="entry name" value="Anticodon-binding domain of PheRS"/>
    <property type="match status" value="1"/>
</dbReference>
<dbReference type="SUPFAM" id="SSF55681">
    <property type="entry name" value="Class II aaRS and biotin synthetases"/>
    <property type="match status" value="1"/>
</dbReference>
<dbReference type="SUPFAM" id="SSF50249">
    <property type="entry name" value="Nucleic acid-binding proteins"/>
    <property type="match status" value="1"/>
</dbReference>
<dbReference type="SUPFAM" id="SSF56037">
    <property type="entry name" value="PheT/TilS domain"/>
    <property type="match status" value="1"/>
</dbReference>
<dbReference type="SUPFAM" id="SSF46955">
    <property type="entry name" value="Putative DNA-binding domain"/>
    <property type="match status" value="1"/>
</dbReference>
<dbReference type="PROSITE" id="PS51483">
    <property type="entry name" value="B5"/>
    <property type="match status" value="1"/>
</dbReference>
<dbReference type="PROSITE" id="PS51447">
    <property type="entry name" value="FDX_ACB"/>
    <property type="match status" value="1"/>
</dbReference>
<dbReference type="PROSITE" id="PS50886">
    <property type="entry name" value="TRBD"/>
    <property type="match status" value="1"/>
</dbReference>
<evidence type="ECO:0000255" key="1">
    <source>
        <dbReference type="HAMAP-Rule" id="MF_00283"/>
    </source>
</evidence>
<reference key="1">
    <citation type="journal article" date="2002" name="Proc. Natl. Acad. Sci. U.S.A.">
        <title>The genome sequence of Bifidobacterium longum reflects its adaptation to the human gastrointestinal tract.</title>
        <authorList>
            <person name="Schell M.A."/>
            <person name="Karmirantzou M."/>
            <person name="Snel B."/>
            <person name="Vilanova D."/>
            <person name="Berger B."/>
            <person name="Pessi G."/>
            <person name="Zwahlen M.-C."/>
            <person name="Desiere F."/>
            <person name="Bork P."/>
            <person name="Delley M."/>
            <person name="Pridmore R.D."/>
            <person name="Arigoni F."/>
        </authorList>
    </citation>
    <scope>NUCLEOTIDE SEQUENCE [LARGE SCALE GENOMIC DNA]</scope>
    <source>
        <strain>NCC 2705</strain>
    </source>
</reference>
<protein>
    <recommendedName>
        <fullName evidence="1">Phenylalanine--tRNA ligase beta subunit</fullName>
        <ecNumber evidence="1">6.1.1.20</ecNumber>
    </recommendedName>
    <alternativeName>
        <fullName evidence="1">Phenylalanyl-tRNA synthetase beta subunit</fullName>
        <shortName evidence="1">PheRS</shortName>
    </alternativeName>
</protein>
<accession>Q8G5E8</accession>
<sequence length="869" mass="94508">MPMIDIDWLKDHVEVPEGLTYEQLAKDLVKVGLEEEEIHSSQVTGPIVVGYVVDATPEPQKNGKTINWCHVDCGDEWNETDEDGNKVPRGIICGAPNMKAGEKVVVTLPGAVLPGDFKIEPRKTYGHISNGMCASERELGLGDNHNGIILLRQYGFSEAEYEALKPGQDAMHLLHLDQPLLEINITPDRGYTLSYRGVAREYHHSTGAAYTDPAVALNEKAPEPADYQPGTPVDIDVEIDDNNPIHGVPGCDRYYARIVKDFNPNAHTPNWMRRRLIRAGMRSISLAVDVTNYVMLDLGQPMHAYDLDKLEGPIVVRRANEGEKLTTLDGKEHDLSVEDLLITDSPNGERGSRILGLAGVMGGLYGEVTADTKNILLEAAHFDQVTIARSARRHKIPSEASRRFERGVDTALQPAATQMAAELMAKYGNGEPSEHPNDVNNTPRAKAIHFKASEVARVAGLDVDINRISDILTDIGCTVAGGGNGEFAVTAPSWRPDLNEPCDLVEEIARLVGYDQIPITVPPAPVEGLVGLTPDQQRRRRVADELAEFGMVESLSYPFVGDDDYKAFGFDPEATKKVSVEIANPLYGDRPYLRREILPTLATTVQRNIRRGIENVSLYELGHVYLWDPNAPAIPALPGGVRPTDEQLAALDAGLPEQPDHVAGILTGLAEDDGWMGGKRPVDWSDAVEAVRRIAGRIGAAIELDQPAADDVPVQWHPGRAARVMVGDVFTGWVGELHPRVNEALGFPAHSAAFELNLTALFATLTGKPVQAKPISTFPPVKQDLAFTVDETVTAGQLENVIRKAAGANLESIELFDVFTGEQVGEGKKSLAYAVVFRSPSKTLSAEDSDAIRKAIVAEAAEIGAQLRA</sequence>
<feature type="chain" id="PRO_0000126849" description="Phenylalanine--tRNA ligase beta subunit">
    <location>
        <begin position="1"/>
        <end position="869"/>
    </location>
</feature>
<feature type="domain" description="tRNA-binding" evidence="1">
    <location>
        <begin position="41"/>
        <end position="162"/>
    </location>
</feature>
<feature type="domain" description="B5" evidence="1">
    <location>
        <begin position="443"/>
        <end position="519"/>
    </location>
</feature>
<feature type="domain" description="FDX-ACB" evidence="1">
    <location>
        <begin position="776"/>
        <end position="868"/>
    </location>
</feature>
<feature type="binding site" evidence="1">
    <location>
        <position position="497"/>
    </location>
    <ligand>
        <name>Mg(2+)</name>
        <dbReference type="ChEBI" id="CHEBI:18420"/>
        <note>shared with alpha subunit</note>
    </ligand>
</feature>
<feature type="binding site" evidence="1">
    <location>
        <position position="503"/>
    </location>
    <ligand>
        <name>Mg(2+)</name>
        <dbReference type="ChEBI" id="CHEBI:18420"/>
        <note>shared with alpha subunit</note>
    </ligand>
</feature>
<feature type="binding site" evidence="1">
    <location>
        <position position="506"/>
    </location>
    <ligand>
        <name>Mg(2+)</name>
        <dbReference type="ChEBI" id="CHEBI:18420"/>
        <note>shared with alpha subunit</note>
    </ligand>
</feature>
<feature type="binding site" evidence="1">
    <location>
        <position position="507"/>
    </location>
    <ligand>
        <name>Mg(2+)</name>
        <dbReference type="ChEBI" id="CHEBI:18420"/>
        <note>shared with alpha subunit</note>
    </ligand>
</feature>
<gene>
    <name evidence="1" type="primary">pheT</name>
    <name type="ordered locus">BL1066</name>
</gene>
<name>SYFB_BIFLO</name>